<accession>B5ZNA1</accession>
<protein>
    <recommendedName>
        <fullName evidence="1">Enolase</fullName>
        <ecNumber evidence="1">4.2.1.11</ecNumber>
    </recommendedName>
    <alternativeName>
        <fullName evidence="1">2-phospho-D-glycerate hydro-lyase</fullName>
    </alternativeName>
    <alternativeName>
        <fullName evidence="1">2-phosphoglycerate dehydratase</fullName>
    </alternativeName>
</protein>
<feature type="chain" id="PRO_1000115903" description="Enolase">
    <location>
        <begin position="1"/>
        <end position="424"/>
    </location>
</feature>
<feature type="active site" description="Proton donor" evidence="1">
    <location>
        <position position="204"/>
    </location>
</feature>
<feature type="active site" description="Proton acceptor" evidence="1">
    <location>
        <position position="336"/>
    </location>
</feature>
<feature type="binding site" evidence="1">
    <location>
        <position position="162"/>
    </location>
    <ligand>
        <name>(2R)-2-phosphoglycerate</name>
        <dbReference type="ChEBI" id="CHEBI:58289"/>
    </ligand>
</feature>
<feature type="binding site" evidence="1">
    <location>
        <position position="241"/>
    </location>
    <ligand>
        <name>Mg(2+)</name>
        <dbReference type="ChEBI" id="CHEBI:18420"/>
    </ligand>
</feature>
<feature type="binding site" evidence="1">
    <location>
        <position position="284"/>
    </location>
    <ligand>
        <name>Mg(2+)</name>
        <dbReference type="ChEBI" id="CHEBI:18420"/>
    </ligand>
</feature>
<feature type="binding site" evidence="1">
    <location>
        <position position="311"/>
    </location>
    <ligand>
        <name>Mg(2+)</name>
        <dbReference type="ChEBI" id="CHEBI:18420"/>
    </ligand>
</feature>
<feature type="binding site" evidence="1">
    <location>
        <position position="336"/>
    </location>
    <ligand>
        <name>(2R)-2-phosphoglycerate</name>
        <dbReference type="ChEBI" id="CHEBI:58289"/>
    </ligand>
</feature>
<feature type="binding site" evidence="1">
    <location>
        <position position="365"/>
    </location>
    <ligand>
        <name>(2R)-2-phosphoglycerate</name>
        <dbReference type="ChEBI" id="CHEBI:58289"/>
    </ligand>
</feature>
<feature type="binding site" evidence="1">
    <location>
        <position position="366"/>
    </location>
    <ligand>
        <name>(2R)-2-phosphoglycerate</name>
        <dbReference type="ChEBI" id="CHEBI:58289"/>
    </ligand>
</feature>
<feature type="binding site" evidence="1">
    <location>
        <position position="387"/>
    </location>
    <ligand>
        <name>(2R)-2-phosphoglycerate</name>
        <dbReference type="ChEBI" id="CHEBI:58289"/>
    </ligand>
</feature>
<organism>
    <name type="scientific">Rhizobium leguminosarum bv. trifolii (strain WSM2304)</name>
    <dbReference type="NCBI Taxonomy" id="395492"/>
    <lineage>
        <taxon>Bacteria</taxon>
        <taxon>Pseudomonadati</taxon>
        <taxon>Pseudomonadota</taxon>
        <taxon>Alphaproteobacteria</taxon>
        <taxon>Hyphomicrobiales</taxon>
        <taxon>Rhizobiaceae</taxon>
        <taxon>Rhizobium/Agrobacterium group</taxon>
        <taxon>Rhizobium</taxon>
    </lineage>
</organism>
<proteinExistence type="inferred from homology"/>
<comment type="function">
    <text evidence="1">Catalyzes the reversible conversion of 2-phosphoglycerate (2-PG) into phosphoenolpyruvate (PEP). It is essential for the degradation of carbohydrates via glycolysis.</text>
</comment>
<comment type="catalytic activity">
    <reaction evidence="1">
        <text>(2R)-2-phosphoglycerate = phosphoenolpyruvate + H2O</text>
        <dbReference type="Rhea" id="RHEA:10164"/>
        <dbReference type="ChEBI" id="CHEBI:15377"/>
        <dbReference type="ChEBI" id="CHEBI:58289"/>
        <dbReference type="ChEBI" id="CHEBI:58702"/>
        <dbReference type="EC" id="4.2.1.11"/>
    </reaction>
</comment>
<comment type="cofactor">
    <cofactor evidence="1">
        <name>Mg(2+)</name>
        <dbReference type="ChEBI" id="CHEBI:18420"/>
    </cofactor>
    <text evidence="1">Binds a second Mg(2+) ion via substrate during catalysis.</text>
</comment>
<comment type="pathway">
    <text evidence="1">Carbohydrate degradation; glycolysis; pyruvate from D-glyceraldehyde 3-phosphate: step 4/5.</text>
</comment>
<comment type="subcellular location">
    <subcellularLocation>
        <location evidence="1">Cytoplasm</location>
    </subcellularLocation>
    <subcellularLocation>
        <location evidence="1">Secreted</location>
    </subcellularLocation>
    <subcellularLocation>
        <location evidence="1">Cell surface</location>
    </subcellularLocation>
    <text evidence="1">Fractions of enolase are present in both the cytoplasm and on the cell surface.</text>
</comment>
<comment type="similarity">
    <text evidence="1">Belongs to the enolase family.</text>
</comment>
<gene>
    <name evidence="1" type="primary">eno</name>
    <name type="ordered locus">Rleg2_1601</name>
</gene>
<reference key="1">
    <citation type="journal article" date="2010" name="Stand. Genomic Sci.">
        <title>Complete genome sequence of Rhizobium leguminosarum bv trifolii strain WSM2304, an effective microsymbiont of the South American clover Trifolium polymorphum.</title>
        <authorList>
            <person name="Reeve W."/>
            <person name="O'Hara G."/>
            <person name="Chain P."/>
            <person name="Ardley J."/>
            <person name="Brau L."/>
            <person name="Nandesena K."/>
            <person name="Tiwari R."/>
            <person name="Malfatti S."/>
            <person name="Kiss H."/>
            <person name="Lapidus A."/>
            <person name="Copeland A."/>
            <person name="Nolan M."/>
            <person name="Land M."/>
            <person name="Ivanova N."/>
            <person name="Mavromatis K."/>
            <person name="Markowitz V."/>
            <person name="Kyrpides N."/>
            <person name="Melino V."/>
            <person name="Denton M."/>
            <person name="Yates R."/>
            <person name="Howieson J."/>
        </authorList>
    </citation>
    <scope>NUCLEOTIDE SEQUENCE [LARGE SCALE GENOMIC DNA]</scope>
    <source>
        <strain>WSM2304</strain>
    </source>
</reference>
<sequence>MTAITDIIAREILDSRGNPTVEVDVYLEDGSMGRAAVPSGASTGAHEAVELRDGGKRYLGKGVQKAVDAANTEIFDAIGGIDAENQIQIDNIMIELDGTPNKSRLGANAILGVSLAVAKAAAQASGLPLYRYVGGASACLLPVPMMNIINGGAHADNPIDFQEFMILPVGADTIAEAVRMGSEVFHTLRKELAAQGHNTNVGDEGGFAPGLKSAPEALDFIMKSIEKAGYKPGDDMCLGLDCASTEFFKDGKYVLEGEGRTLESGAMAEYLAELAAKYPIISIEDGMAEDDWDGWKTLTDLTGKKTQLVGDDLFVTNSARLRDGIRMGVANSILVKVNQIGSLTETLDAVNTAHKAAYTAVMSHRSGETEDSTIADLAVATNCGQIKTGSLSRSDRLAKYNQLIRIEEGLGPQAQYAGRSIIRG</sequence>
<dbReference type="EC" id="4.2.1.11" evidence="1"/>
<dbReference type="EMBL" id="CP001191">
    <property type="protein sequence ID" value="ACI54891.1"/>
    <property type="molecule type" value="Genomic_DNA"/>
</dbReference>
<dbReference type="RefSeq" id="WP_003586659.1">
    <property type="nucleotide sequence ID" value="NC_011369.1"/>
</dbReference>
<dbReference type="SMR" id="B5ZNA1"/>
<dbReference type="STRING" id="395492.Rleg2_1601"/>
<dbReference type="KEGG" id="rlt:Rleg2_1601"/>
<dbReference type="eggNOG" id="COG0148">
    <property type="taxonomic scope" value="Bacteria"/>
</dbReference>
<dbReference type="HOGENOM" id="CLU_031223_2_1_5"/>
<dbReference type="UniPathway" id="UPA00109">
    <property type="reaction ID" value="UER00187"/>
</dbReference>
<dbReference type="Proteomes" id="UP000008330">
    <property type="component" value="Chromosome"/>
</dbReference>
<dbReference type="GO" id="GO:0009986">
    <property type="term" value="C:cell surface"/>
    <property type="evidence" value="ECO:0007669"/>
    <property type="project" value="UniProtKB-SubCell"/>
</dbReference>
<dbReference type="GO" id="GO:0005576">
    <property type="term" value="C:extracellular region"/>
    <property type="evidence" value="ECO:0007669"/>
    <property type="project" value="UniProtKB-SubCell"/>
</dbReference>
<dbReference type="GO" id="GO:0000015">
    <property type="term" value="C:phosphopyruvate hydratase complex"/>
    <property type="evidence" value="ECO:0007669"/>
    <property type="project" value="InterPro"/>
</dbReference>
<dbReference type="GO" id="GO:0000287">
    <property type="term" value="F:magnesium ion binding"/>
    <property type="evidence" value="ECO:0007669"/>
    <property type="project" value="UniProtKB-UniRule"/>
</dbReference>
<dbReference type="GO" id="GO:0004634">
    <property type="term" value="F:phosphopyruvate hydratase activity"/>
    <property type="evidence" value="ECO:0007669"/>
    <property type="project" value="UniProtKB-UniRule"/>
</dbReference>
<dbReference type="GO" id="GO:0006096">
    <property type="term" value="P:glycolytic process"/>
    <property type="evidence" value="ECO:0007669"/>
    <property type="project" value="UniProtKB-UniRule"/>
</dbReference>
<dbReference type="CDD" id="cd03313">
    <property type="entry name" value="enolase"/>
    <property type="match status" value="1"/>
</dbReference>
<dbReference type="FunFam" id="3.20.20.120:FF:000001">
    <property type="entry name" value="Enolase"/>
    <property type="match status" value="1"/>
</dbReference>
<dbReference type="FunFam" id="3.30.390.10:FF:000001">
    <property type="entry name" value="Enolase"/>
    <property type="match status" value="1"/>
</dbReference>
<dbReference type="Gene3D" id="3.20.20.120">
    <property type="entry name" value="Enolase-like C-terminal domain"/>
    <property type="match status" value="1"/>
</dbReference>
<dbReference type="Gene3D" id="3.30.390.10">
    <property type="entry name" value="Enolase-like, N-terminal domain"/>
    <property type="match status" value="1"/>
</dbReference>
<dbReference type="HAMAP" id="MF_00318">
    <property type="entry name" value="Enolase"/>
    <property type="match status" value="1"/>
</dbReference>
<dbReference type="InterPro" id="IPR000941">
    <property type="entry name" value="Enolase"/>
</dbReference>
<dbReference type="InterPro" id="IPR036849">
    <property type="entry name" value="Enolase-like_C_sf"/>
</dbReference>
<dbReference type="InterPro" id="IPR029017">
    <property type="entry name" value="Enolase-like_N"/>
</dbReference>
<dbReference type="InterPro" id="IPR020810">
    <property type="entry name" value="Enolase_C"/>
</dbReference>
<dbReference type="InterPro" id="IPR020809">
    <property type="entry name" value="Enolase_CS"/>
</dbReference>
<dbReference type="InterPro" id="IPR020811">
    <property type="entry name" value="Enolase_N"/>
</dbReference>
<dbReference type="NCBIfam" id="TIGR01060">
    <property type="entry name" value="eno"/>
    <property type="match status" value="1"/>
</dbReference>
<dbReference type="PANTHER" id="PTHR11902">
    <property type="entry name" value="ENOLASE"/>
    <property type="match status" value="1"/>
</dbReference>
<dbReference type="PANTHER" id="PTHR11902:SF1">
    <property type="entry name" value="ENOLASE"/>
    <property type="match status" value="1"/>
</dbReference>
<dbReference type="Pfam" id="PF00113">
    <property type="entry name" value="Enolase_C"/>
    <property type="match status" value="1"/>
</dbReference>
<dbReference type="Pfam" id="PF03952">
    <property type="entry name" value="Enolase_N"/>
    <property type="match status" value="1"/>
</dbReference>
<dbReference type="PIRSF" id="PIRSF001400">
    <property type="entry name" value="Enolase"/>
    <property type="match status" value="1"/>
</dbReference>
<dbReference type="PRINTS" id="PR00148">
    <property type="entry name" value="ENOLASE"/>
</dbReference>
<dbReference type="SFLD" id="SFLDF00002">
    <property type="entry name" value="enolase"/>
    <property type="match status" value="1"/>
</dbReference>
<dbReference type="SFLD" id="SFLDG00178">
    <property type="entry name" value="enolase"/>
    <property type="match status" value="1"/>
</dbReference>
<dbReference type="SMART" id="SM01192">
    <property type="entry name" value="Enolase_C"/>
    <property type="match status" value="1"/>
</dbReference>
<dbReference type="SMART" id="SM01193">
    <property type="entry name" value="Enolase_N"/>
    <property type="match status" value="1"/>
</dbReference>
<dbReference type="SUPFAM" id="SSF51604">
    <property type="entry name" value="Enolase C-terminal domain-like"/>
    <property type="match status" value="1"/>
</dbReference>
<dbReference type="SUPFAM" id="SSF54826">
    <property type="entry name" value="Enolase N-terminal domain-like"/>
    <property type="match status" value="1"/>
</dbReference>
<dbReference type="PROSITE" id="PS00164">
    <property type="entry name" value="ENOLASE"/>
    <property type="match status" value="1"/>
</dbReference>
<evidence type="ECO:0000255" key="1">
    <source>
        <dbReference type="HAMAP-Rule" id="MF_00318"/>
    </source>
</evidence>
<keyword id="KW-0963">Cytoplasm</keyword>
<keyword id="KW-0324">Glycolysis</keyword>
<keyword id="KW-0456">Lyase</keyword>
<keyword id="KW-0460">Magnesium</keyword>
<keyword id="KW-0479">Metal-binding</keyword>
<keyword id="KW-1185">Reference proteome</keyword>
<keyword id="KW-0964">Secreted</keyword>
<name>ENO_RHILW</name>